<sequence>MISPDQQYETDTNLYNPSEIEKKWQSIWTENNLYKTDELTDNSDKFYALSMFPYPSGNLHMGHVRNYVITDLIARFQRFKGKSVLHPMGWDAFGLPAENAAIERGISPSVWTKKNISHMKSQLKLLGLSVDWDREFATCDENYYVWTQYLFLELYKAGLVYQKESEVNWDPIDNTVLANEQVDSEGKSWRSGAIVEKKLLKQWFLRITNYADELLKDLEKLDNWPERVKIMQDNWIGKSIGTNINFNINTHPEKKLTVFTTRPDTLFGVTYLAISVNHSLIKNISDQETIQHIENLKKYLKKNKNNELEKIGIKTSLIAINPVNSEPIPIWVASYVLDEYGTGAVMGVPAHDLRDFEFAKKNNIDIKQVIIKDKSEQNKELDEAYVENGYLINSNQYDGVANTIAKLKISEEGVNNRWAENKTQYRLRDWLISRQRYWGCPIPIVNCKKCGSVPLNQSELPVALPKDIDISANKINALGDNKNWVNTTCPKCGIAAKKETDTMDTFMCSSWYFLRYPSSKCPNKPFEKIEINKWLPVDQYVGGVEHAILHLLYARFFTKALRDNQLFEIDEPFKKLLTQGMVQAAAYKNNKTGKYVSPSDINDLSNPTDPIDNTKLEILFEKMSKSKYNGIDPESVIKKYGADTARMFILFKAPPEKDLEWGDTDVEGQFRFLSRIWKLYINCAKNVNIKSNSYPDKEKSLIKSMNIAIKEISNDILNNQFNTAISELMKFYNSLSNSINDVNNNLKIDALKTFCILLAPFAPHIAEEIWHLIGFKKSVHLEHWPSFNAEALKEDSYELVIQVNGKVREKVNINHDMNEDQIKELTLKRPNILKWTKDKEIRKIIIVKGKIMNIVV</sequence>
<keyword id="KW-0030">Aminoacyl-tRNA synthetase</keyword>
<keyword id="KW-0067">ATP-binding</keyword>
<keyword id="KW-0963">Cytoplasm</keyword>
<keyword id="KW-0436">Ligase</keyword>
<keyword id="KW-0547">Nucleotide-binding</keyword>
<keyword id="KW-0648">Protein biosynthesis</keyword>
<keyword id="KW-1185">Reference proteome</keyword>
<dbReference type="EC" id="6.1.1.4" evidence="1"/>
<dbReference type="EMBL" id="CP000576">
    <property type="protein sequence ID" value="ABO17593.1"/>
    <property type="molecule type" value="Genomic_DNA"/>
</dbReference>
<dbReference type="RefSeq" id="WP_011862941.1">
    <property type="nucleotide sequence ID" value="NC_009091.1"/>
</dbReference>
<dbReference type="SMR" id="A3PCW8"/>
<dbReference type="STRING" id="167546.P9301_09701"/>
<dbReference type="KEGG" id="pmg:P9301_09701"/>
<dbReference type="eggNOG" id="COG0495">
    <property type="taxonomic scope" value="Bacteria"/>
</dbReference>
<dbReference type="HOGENOM" id="CLU_004427_0_0_3"/>
<dbReference type="OrthoDB" id="9810365at2"/>
<dbReference type="Proteomes" id="UP000001430">
    <property type="component" value="Chromosome"/>
</dbReference>
<dbReference type="GO" id="GO:0005829">
    <property type="term" value="C:cytosol"/>
    <property type="evidence" value="ECO:0007669"/>
    <property type="project" value="TreeGrafter"/>
</dbReference>
<dbReference type="GO" id="GO:0002161">
    <property type="term" value="F:aminoacyl-tRNA deacylase activity"/>
    <property type="evidence" value="ECO:0007669"/>
    <property type="project" value="InterPro"/>
</dbReference>
<dbReference type="GO" id="GO:0005524">
    <property type="term" value="F:ATP binding"/>
    <property type="evidence" value="ECO:0007669"/>
    <property type="project" value="UniProtKB-UniRule"/>
</dbReference>
<dbReference type="GO" id="GO:0004823">
    <property type="term" value="F:leucine-tRNA ligase activity"/>
    <property type="evidence" value="ECO:0007669"/>
    <property type="project" value="UniProtKB-UniRule"/>
</dbReference>
<dbReference type="GO" id="GO:0006429">
    <property type="term" value="P:leucyl-tRNA aminoacylation"/>
    <property type="evidence" value="ECO:0007669"/>
    <property type="project" value="UniProtKB-UniRule"/>
</dbReference>
<dbReference type="CDD" id="cd07958">
    <property type="entry name" value="Anticodon_Ia_Leu_BEm"/>
    <property type="match status" value="1"/>
</dbReference>
<dbReference type="CDD" id="cd00812">
    <property type="entry name" value="LeuRS_core"/>
    <property type="match status" value="1"/>
</dbReference>
<dbReference type="FunFam" id="3.40.50.620:FF:000003">
    <property type="entry name" value="Leucine--tRNA ligase"/>
    <property type="match status" value="1"/>
</dbReference>
<dbReference type="FunFam" id="1.10.730.10:FF:000011">
    <property type="entry name" value="Leucine--tRNA ligase chloroplastic/mitochondrial"/>
    <property type="match status" value="1"/>
</dbReference>
<dbReference type="Gene3D" id="3.40.50.620">
    <property type="entry name" value="HUPs"/>
    <property type="match status" value="2"/>
</dbReference>
<dbReference type="Gene3D" id="1.10.730.10">
    <property type="entry name" value="Isoleucyl-tRNA Synthetase, Domain 1"/>
    <property type="match status" value="1"/>
</dbReference>
<dbReference type="HAMAP" id="MF_00049_B">
    <property type="entry name" value="Leu_tRNA_synth_B"/>
    <property type="match status" value="1"/>
</dbReference>
<dbReference type="InterPro" id="IPR001412">
    <property type="entry name" value="aa-tRNA-synth_I_CS"/>
</dbReference>
<dbReference type="InterPro" id="IPR002300">
    <property type="entry name" value="aa-tRNA-synth_Ia"/>
</dbReference>
<dbReference type="InterPro" id="IPR002302">
    <property type="entry name" value="Leu-tRNA-ligase"/>
</dbReference>
<dbReference type="InterPro" id="IPR025709">
    <property type="entry name" value="Leu_tRNA-synth_edit"/>
</dbReference>
<dbReference type="InterPro" id="IPR013155">
    <property type="entry name" value="M/V/L/I-tRNA-synth_anticd-bd"/>
</dbReference>
<dbReference type="InterPro" id="IPR015413">
    <property type="entry name" value="Methionyl/Leucyl_tRNA_Synth"/>
</dbReference>
<dbReference type="InterPro" id="IPR014729">
    <property type="entry name" value="Rossmann-like_a/b/a_fold"/>
</dbReference>
<dbReference type="InterPro" id="IPR009080">
    <property type="entry name" value="tRNAsynth_Ia_anticodon-bd"/>
</dbReference>
<dbReference type="InterPro" id="IPR009008">
    <property type="entry name" value="Val/Leu/Ile-tRNA-synth_edit"/>
</dbReference>
<dbReference type="NCBIfam" id="TIGR00396">
    <property type="entry name" value="leuS_bact"/>
    <property type="match status" value="1"/>
</dbReference>
<dbReference type="PANTHER" id="PTHR43740:SF2">
    <property type="entry name" value="LEUCINE--TRNA LIGASE, MITOCHONDRIAL"/>
    <property type="match status" value="1"/>
</dbReference>
<dbReference type="PANTHER" id="PTHR43740">
    <property type="entry name" value="LEUCYL-TRNA SYNTHETASE"/>
    <property type="match status" value="1"/>
</dbReference>
<dbReference type="Pfam" id="PF08264">
    <property type="entry name" value="Anticodon_1"/>
    <property type="match status" value="1"/>
</dbReference>
<dbReference type="Pfam" id="PF00133">
    <property type="entry name" value="tRNA-synt_1"/>
    <property type="match status" value="2"/>
</dbReference>
<dbReference type="Pfam" id="PF13603">
    <property type="entry name" value="tRNA-synt_1_2"/>
    <property type="match status" value="1"/>
</dbReference>
<dbReference type="Pfam" id="PF09334">
    <property type="entry name" value="tRNA-synt_1g"/>
    <property type="match status" value="1"/>
</dbReference>
<dbReference type="PRINTS" id="PR00985">
    <property type="entry name" value="TRNASYNTHLEU"/>
</dbReference>
<dbReference type="SUPFAM" id="SSF47323">
    <property type="entry name" value="Anticodon-binding domain of a subclass of class I aminoacyl-tRNA synthetases"/>
    <property type="match status" value="1"/>
</dbReference>
<dbReference type="SUPFAM" id="SSF52374">
    <property type="entry name" value="Nucleotidylyl transferase"/>
    <property type="match status" value="1"/>
</dbReference>
<dbReference type="SUPFAM" id="SSF50677">
    <property type="entry name" value="ValRS/IleRS/LeuRS editing domain"/>
    <property type="match status" value="1"/>
</dbReference>
<dbReference type="PROSITE" id="PS00178">
    <property type="entry name" value="AA_TRNA_LIGASE_I"/>
    <property type="match status" value="1"/>
</dbReference>
<proteinExistence type="inferred from homology"/>
<organism>
    <name type="scientific">Prochlorococcus marinus (strain MIT 9301)</name>
    <dbReference type="NCBI Taxonomy" id="167546"/>
    <lineage>
        <taxon>Bacteria</taxon>
        <taxon>Bacillati</taxon>
        <taxon>Cyanobacteriota</taxon>
        <taxon>Cyanophyceae</taxon>
        <taxon>Synechococcales</taxon>
        <taxon>Prochlorococcaceae</taxon>
        <taxon>Prochlorococcus</taxon>
    </lineage>
</organism>
<comment type="catalytic activity">
    <reaction evidence="1">
        <text>tRNA(Leu) + L-leucine + ATP = L-leucyl-tRNA(Leu) + AMP + diphosphate</text>
        <dbReference type="Rhea" id="RHEA:11688"/>
        <dbReference type="Rhea" id="RHEA-COMP:9613"/>
        <dbReference type="Rhea" id="RHEA-COMP:9622"/>
        <dbReference type="ChEBI" id="CHEBI:30616"/>
        <dbReference type="ChEBI" id="CHEBI:33019"/>
        <dbReference type="ChEBI" id="CHEBI:57427"/>
        <dbReference type="ChEBI" id="CHEBI:78442"/>
        <dbReference type="ChEBI" id="CHEBI:78494"/>
        <dbReference type="ChEBI" id="CHEBI:456215"/>
        <dbReference type="EC" id="6.1.1.4"/>
    </reaction>
</comment>
<comment type="subcellular location">
    <subcellularLocation>
        <location evidence="1">Cytoplasm</location>
    </subcellularLocation>
</comment>
<comment type="similarity">
    <text evidence="1">Belongs to the class-I aminoacyl-tRNA synthetase family.</text>
</comment>
<accession>A3PCW8</accession>
<reference key="1">
    <citation type="journal article" date="2007" name="PLoS Genet.">
        <title>Patterns and implications of gene gain and loss in the evolution of Prochlorococcus.</title>
        <authorList>
            <person name="Kettler G.C."/>
            <person name="Martiny A.C."/>
            <person name="Huang K."/>
            <person name="Zucker J."/>
            <person name="Coleman M.L."/>
            <person name="Rodrigue S."/>
            <person name="Chen F."/>
            <person name="Lapidus A."/>
            <person name="Ferriera S."/>
            <person name="Johnson J."/>
            <person name="Steglich C."/>
            <person name="Church G.M."/>
            <person name="Richardson P."/>
            <person name="Chisholm S.W."/>
        </authorList>
    </citation>
    <scope>NUCLEOTIDE SEQUENCE [LARGE SCALE GENOMIC DNA]</scope>
    <source>
        <strain>MIT 9301</strain>
    </source>
</reference>
<name>SYL_PROM0</name>
<feature type="chain" id="PRO_1000009392" description="Leucine--tRNA ligase">
    <location>
        <begin position="1"/>
        <end position="856"/>
    </location>
</feature>
<feature type="short sequence motif" description="'HIGH' region">
    <location>
        <begin position="53"/>
        <end position="63"/>
    </location>
</feature>
<feature type="short sequence motif" description="'KMSKS' region">
    <location>
        <begin position="622"/>
        <end position="626"/>
    </location>
</feature>
<feature type="binding site" evidence="1">
    <location>
        <position position="625"/>
    </location>
    <ligand>
        <name>ATP</name>
        <dbReference type="ChEBI" id="CHEBI:30616"/>
    </ligand>
</feature>
<gene>
    <name evidence="1" type="primary">leuS</name>
    <name type="ordered locus">P9301_09701</name>
</gene>
<protein>
    <recommendedName>
        <fullName evidence="1">Leucine--tRNA ligase</fullName>
        <ecNumber evidence="1">6.1.1.4</ecNumber>
    </recommendedName>
    <alternativeName>
        <fullName evidence="1">Leucyl-tRNA synthetase</fullName>
        <shortName evidence="1">LeuRS</shortName>
    </alternativeName>
</protein>
<evidence type="ECO:0000255" key="1">
    <source>
        <dbReference type="HAMAP-Rule" id="MF_00049"/>
    </source>
</evidence>